<protein>
    <recommendedName>
        <fullName evidence="1">Large ribosomal subunit protein uL1</fullName>
    </recommendedName>
    <alternativeName>
        <fullName evidence="2">50S ribosomal protein L1</fullName>
    </alternativeName>
</protein>
<keyword id="KW-1185">Reference proteome</keyword>
<keyword id="KW-0678">Repressor</keyword>
<keyword id="KW-0687">Ribonucleoprotein</keyword>
<keyword id="KW-0689">Ribosomal protein</keyword>
<keyword id="KW-0694">RNA-binding</keyword>
<keyword id="KW-0699">rRNA-binding</keyword>
<keyword id="KW-0810">Translation regulation</keyword>
<keyword id="KW-0820">tRNA-binding</keyword>
<proteinExistence type="inferred from homology"/>
<evidence type="ECO:0000255" key="1">
    <source>
        <dbReference type="HAMAP-Rule" id="MF_01318"/>
    </source>
</evidence>
<evidence type="ECO:0000305" key="2"/>
<gene>
    <name evidence="1" type="primary">rplA</name>
    <name type="ordered locus">CKL_0213</name>
</gene>
<accession>A5N4N6</accession>
<organism>
    <name type="scientific">Clostridium kluyveri (strain ATCC 8527 / DSM 555 / NBRC 12016 / NCIMB 10680 / K1)</name>
    <dbReference type="NCBI Taxonomy" id="431943"/>
    <lineage>
        <taxon>Bacteria</taxon>
        <taxon>Bacillati</taxon>
        <taxon>Bacillota</taxon>
        <taxon>Clostridia</taxon>
        <taxon>Eubacteriales</taxon>
        <taxon>Clostridiaceae</taxon>
        <taxon>Clostridium</taxon>
    </lineage>
</organism>
<reference key="1">
    <citation type="journal article" date="2008" name="Proc. Natl. Acad. Sci. U.S.A.">
        <title>The genome of Clostridium kluyveri, a strict anaerobe with unique metabolic features.</title>
        <authorList>
            <person name="Seedorf H."/>
            <person name="Fricke W.F."/>
            <person name="Veith B."/>
            <person name="Brueggemann H."/>
            <person name="Liesegang H."/>
            <person name="Strittmatter A."/>
            <person name="Miethke M."/>
            <person name="Buckel W."/>
            <person name="Hinderberger J."/>
            <person name="Li F."/>
            <person name="Hagemeier C."/>
            <person name="Thauer R.K."/>
            <person name="Gottschalk G."/>
        </authorList>
    </citation>
    <scope>NUCLEOTIDE SEQUENCE [LARGE SCALE GENOMIC DNA]</scope>
    <source>
        <strain>ATCC 8527 / DSM 555 / NBRC 12016 / NCIMB 10680 / K1</strain>
    </source>
</reference>
<name>RL1_CLOK5</name>
<comment type="function">
    <text evidence="1">Binds directly to 23S rRNA. The L1 stalk is quite mobile in the ribosome, and is involved in E site tRNA release.</text>
</comment>
<comment type="function">
    <text evidence="1">Protein L1 is also a translational repressor protein, it controls the translation of the L11 operon by binding to its mRNA.</text>
</comment>
<comment type="subunit">
    <text evidence="1">Part of the 50S ribosomal subunit.</text>
</comment>
<comment type="similarity">
    <text evidence="1">Belongs to the universal ribosomal protein uL1 family.</text>
</comment>
<dbReference type="EMBL" id="CP000673">
    <property type="protein sequence ID" value="EDK32267.1"/>
    <property type="molecule type" value="Genomic_DNA"/>
</dbReference>
<dbReference type="RefSeq" id="WP_011988793.1">
    <property type="nucleotide sequence ID" value="NC_009706.1"/>
</dbReference>
<dbReference type="SMR" id="A5N4N6"/>
<dbReference type="STRING" id="431943.CKL_0213"/>
<dbReference type="KEGG" id="ckl:CKL_0213"/>
<dbReference type="eggNOG" id="COG0081">
    <property type="taxonomic scope" value="Bacteria"/>
</dbReference>
<dbReference type="HOGENOM" id="CLU_062853_0_0_9"/>
<dbReference type="Proteomes" id="UP000002411">
    <property type="component" value="Chromosome"/>
</dbReference>
<dbReference type="GO" id="GO:0015934">
    <property type="term" value="C:large ribosomal subunit"/>
    <property type="evidence" value="ECO:0007669"/>
    <property type="project" value="InterPro"/>
</dbReference>
<dbReference type="GO" id="GO:0019843">
    <property type="term" value="F:rRNA binding"/>
    <property type="evidence" value="ECO:0007669"/>
    <property type="project" value="UniProtKB-UniRule"/>
</dbReference>
<dbReference type="GO" id="GO:0003735">
    <property type="term" value="F:structural constituent of ribosome"/>
    <property type="evidence" value="ECO:0007669"/>
    <property type="project" value="InterPro"/>
</dbReference>
<dbReference type="GO" id="GO:0000049">
    <property type="term" value="F:tRNA binding"/>
    <property type="evidence" value="ECO:0007669"/>
    <property type="project" value="UniProtKB-KW"/>
</dbReference>
<dbReference type="GO" id="GO:0006417">
    <property type="term" value="P:regulation of translation"/>
    <property type="evidence" value="ECO:0007669"/>
    <property type="project" value="UniProtKB-KW"/>
</dbReference>
<dbReference type="GO" id="GO:0006412">
    <property type="term" value="P:translation"/>
    <property type="evidence" value="ECO:0007669"/>
    <property type="project" value="UniProtKB-UniRule"/>
</dbReference>
<dbReference type="CDD" id="cd00403">
    <property type="entry name" value="Ribosomal_L1"/>
    <property type="match status" value="1"/>
</dbReference>
<dbReference type="FunFam" id="3.40.50.790:FF:000001">
    <property type="entry name" value="50S ribosomal protein L1"/>
    <property type="match status" value="1"/>
</dbReference>
<dbReference type="Gene3D" id="3.30.190.20">
    <property type="match status" value="1"/>
</dbReference>
<dbReference type="Gene3D" id="3.40.50.790">
    <property type="match status" value="1"/>
</dbReference>
<dbReference type="HAMAP" id="MF_01318_B">
    <property type="entry name" value="Ribosomal_uL1_B"/>
    <property type="match status" value="1"/>
</dbReference>
<dbReference type="InterPro" id="IPR005878">
    <property type="entry name" value="Ribosom_uL1_bac-type"/>
</dbReference>
<dbReference type="InterPro" id="IPR002143">
    <property type="entry name" value="Ribosomal_uL1"/>
</dbReference>
<dbReference type="InterPro" id="IPR023674">
    <property type="entry name" value="Ribosomal_uL1-like"/>
</dbReference>
<dbReference type="InterPro" id="IPR028364">
    <property type="entry name" value="Ribosomal_uL1/biogenesis"/>
</dbReference>
<dbReference type="InterPro" id="IPR016095">
    <property type="entry name" value="Ribosomal_uL1_3-a/b-sand"/>
</dbReference>
<dbReference type="InterPro" id="IPR023673">
    <property type="entry name" value="Ribosomal_uL1_CS"/>
</dbReference>
<dbReference type="NCBIfam" id="TIGR01169">
    <property type="entry name" value="rplA_bact"/>
    <property type="match status" value="1"/>
</dbReference>
<dbReference type="PANTHER" id="PTHR36427">
    <property type="entry name" value="54S RIBOSOMAL PROTEIN L1, MITOCHONDRIAL"/>
    <property type="match status" value="1"/>
</dbReference>
<dbReference type="PANTHER" id="PTHR36427:SF3">
    <property type="entry name" value="LARGE RIBOSOMAL SUBUNIT PROTEIN UL1M"/>
    <property type="match status" value="1"/>
</dbReference>
<dbReference type="Pfam" id="PF00687">
    <property type="entry name" value="Ribosomal_L1"/>
    <property type="match status" value="1"/>
</dbReference>
<dbReference type="PIRSF" id="PIRSF002155">
    <property type="entry name" value="Ribosomal_L1"/>
    <property type="match status" value="1"/>
</dbReference>
<dbReference type="SUPFAM" id="SSF56808">
    <property type="entry name" value="Ribosomal protein L1"/>
    <property type="match status" value="1"/>
</dbReference>
<dbReference type="PROSITE" id="PS01199">
    <property type="entry name" value="RIBOSOMAL_L1"/>
    <property type="match status" value="1"/>
</dbReference>
<feature type="chain" id="PRO_1000086279" description="Large ribosomal subunit protein uL1">
    <location>
        <begin position="1"/>
        <end position="229"/>
    </location>
</feature>
<sequence>MGKKYKESTKLIDRKTLYTPLEAMELALKTAKANFDETIELSIKLGVDPRHADQQVRGAVVLPHGTGKKVRVLVLAKGDRIKEAEDAGADYVGAEEYVEKIQKENWFDFDVVVATPDMMGVVGRLGRILGPKGLMPNPKSGTVTFDVAKAIQEIKAGKVEYRVDKTSIVHVPIGKKSFEVQKLLDNFRVLMEAIIKAKPSAAKGQYLKSVAVSSTMGPGIKINSVKVLE</sequence>